<comment type="function">
    <text evidence="1">Catalyzes the reversible isomerization of glucose-6-phosphate to fructose-6-phosphate.</text>
</comment>
<comment type="catalytic activity">
    <reaction evidence="1">
        <text>alpha-D-glucose 6-phosphate = beta-D-fructose 6-phosphate</text>
        <dbReference type="Rhea" id="RHEA:11816"/>
        <dbReference type="ChEBI" id="CHEBI:57634"/>
        <dbReference type="ChEBI" id="CHEBI:58225"/>
        <dbReference type="EC" id="5.3.1.9"/>
    </reaction>
</comment>
<comment type="pathway">
    <text evidence="1">Carbohydrate biosynthesis; gluconeogenesis.</text>
</comment>
<comment type="pathway">
    <text evidence="1">Carbohydrate degradation; glycolysis; D-glyceraldehyde 3-phosphate and glycerone phosphate from D-glucose: step 2/4.</text>
</comment>
<comment type="subcellular location">
    <subcellularLocation>
        <location evidence="1">Cytoplasm</location>
    </subcellularLocation>
</comment>
<comment type="similarity">
    <text evidence="1">Belongs to the GPI family.</text>
</comment>
<comment type="sequence caution" evidence="2">
    <conflict type="erroneous initiation">
        <sequence resource="EMBL-CDS" id="AAZ57812"/>
    </conflict>
</comment>
<gene>
    <name evidence="1" type="primary">pgi</name>
    <name type="ordered locus">PMN2A_0320</name>
</gene>
<keyword id="KW-0963">Cytoplasm</keyword>
<keyword id="KW-0312">Gluconeogenesis</keyword>
<keyword id="KW-0324">Glycolysis</keyword>
<keyword id="KW-0413">Isomerase</keyword>
<keyword id="KW-1185">Reference proteome</keyword>
<dbReference type="EC" id="5.3.1.9" evidence="1"/>
<dbReference type="EMBL" id="CP000095">
    <property type="protein sequence ID" value="AAZ57812.1"/>
    <property type="status" value="ALT_INIT"/>
    <property type="molecule type" value="Genomic_DNA"/>
</dbReference>
<dbReference type="RefSeq" id="WP_011293854.1">
    <property type="nucleotide sequence ID" value="NC_007335.2"/>
</dbReference>
<dbReference type="SMR" id="Q46L16"/>
<dbReference type="STRING" id="59920.PMN2A_0320"/>
<dbReference type="KEGG" id="pmn:PMN2A_0320"/>
<dbReference type="HOGENOM" id="CLU_033288_0_0_3"/>
<dbReference type="OrthoDB" id="140919at2"/>
<dbReference type="PhylomeDB" id="Q46L16"/>
<dbReference type="UniPathway" id="UPA00109">
    <property type="reaction ID" value="UER00181"/>
</dbReference>
<dbReference type="UniPathway" id="UPA00138"/>
<dbReference type="Proteomes" id="UP000002535">
    <property type="component" value="Chromosome"/>
</dbReference>
<dbReference type="GO" id="GO:0005829">
    <property type="term" value="C:cytosol"/>
    <property type="evidence" value="ECO:0007669"/>
    <property type="project" value="TreeGrafter"/>
</dbReference>
<dbReference type="GO" id="GO:0097367">
    <property type="term" value="F:carbohydrate derivative binding"/>
    <property type="evidence" value="ECO:0007669"/>
    <property type="project" value="InterPro"/>
</dbReference>
<dbReference type="GO" id="GO:0004347">
    <property type="term" value="F:glucose-6-phosphate isomerase activity"/>
    <property type="evidence" value="ECO:0007669"/>
    <property type="project" value="UniProtKB-UniRule"/>
</dbReference>
<dbReference type="GO" id="GO:0048029">
    <property type="term" value="F:monosaccharide binding"/>
    <property type="evidence" value="ECO:0007669"/>
    <property type="project" value="TreeGrafter"/>
</dbReference>
<dbReference type="GO" id="GO:0006094">
    <property type="term" value="P:gluconeogenesis"/>
    <property type="evidence" value="ECO:0007669"/>
    <property type="project" value="UniProtKB-UniRule"/>
</dbReference>
<dbReference type="GO" id="GO:0051156">
    <property type="term" value="P:glucose 6-phosphate metabolic process"/>
    <property type="evidence" value="ECO:0007669"/>
    <property type="project" value="TreeGrafter"/>
</dbReference>
<dbReference type="GO" id="GO:0006096">
    <property type="term" value="P:glycolytic process"/>
    <property type="evidence" value="ECO:0007669"/>
    <property type="project" value="UniProtKB-UniRule"/>
</dbReference>
<dbReference type="CDD" id="cd05015">
    <property type="entry name" value="SIS_PGI_1"/>
    <property type="match status" value="1"/>
</dbReference>
<dbReference type="CDD" id="cd05016">
    <property type="entry name" value="SIS_PGI_2"/>
    <property type="match status" value="1"/>
</dbReference>
<dbReference type="FunFam" id="3.40.50.10490:FF:000021">
    <property type="entry name" value="Glucose-6-phosphate isomerase"/>
    <property type="match status" value="1"/>
</dbReference>
<dbReference type="Gene3D" id="3.40.50.10490">
    <property type="entry name" value="Glucose-6-phosphate isomerase like protein, domain 1"/>
    <property type="match status" value="2"/>
</dbReference>
<dbReference type="HAMAP" id="MF_00473">
    <property type="entry name" value="G6P_isomerase"/>
    <property type="match status" value="1"/>
</dbReference>
<dbReference type="InterPro" id="IPR001672">
    <property type="entry name" value="G6P_Isomerase"/>
</dbReference>
<dbReference type="InterPro" id="IPR018189">
    <property type="entry name" value="Phosphoglucose_isomerase_CS"/>
</dbReference>
<dbReference type="InterPro" id="IPR046348">
    <property type="entry name" value="SIS_dom_sf"/>
</dbReference>
<dbReference type="InterPro" id="IPR035476">
    <property type="entry name" value="SIS_PGI_1"/>
</dbReference>
<dbReference type="InterPro" id="IPR035482">
    <property type="entry name" value="SIS_PGI_2"/>
</dbReference>
<dbReference type="NCBIfam" id="NF010696">
    <property type="entry name" value="PRK14096.1"/>
    <property type="match status" value="1"/>
</dbReference>
<dbReference type="PANTHER" id="PTHR11469">
    <property type="entry name" value="GLUCOSE-6-PHOSPHATE ISOMERASE"/>
    <property type="match status" value="1"/>
</dbReference>
<dbReference type="PANTHER" id="PTHR11469:SF1">
    <property type="entry name" value="GLUCOSE-6-PHOSPHATE ISOMERASE"/>
    <property type="match status" value="1"/>
</dbReference>
<dbReference type="Pfam" id="PF00342">
    <property type="entry name" value="PGI"/>
    <property type="match status" value="2"/>
</dbReference>
<dbReference type="PRINTS" id="PR00662">
    <property type="entry name" value="G6PISOMERASE"/>
</dbReference>
<dbReference type="SUPFAM" id="SSF53697">
    <property type="entry name" value="SIS domain"/>
    <property type="match status" value="1"/>
</dbReference>
<dbReference type="PROSITE" id="PS00174">
    <property type="entry name" value="P_GLUCOSE_ISOMERASE_2"/>
    <property type="match status" value="1"/>
</dbReference>
<dbReference type="PROSITE" id="PS51463">
    <property type="entry name" value="P_GLUCOSE_ISOMERASE_3"/>
    <property type="match status" value="1"/>
</dbReference>
<organism>
    <name type="scientific">Prochlorococcus marinus (strain NATL2A)</name>
    <dbReference type="NCBI Taxonomy" id="59920"/>
    <lineage>
        <taxon>Bacteria</taxon>
        <taxon>Bacillati</taxon>
        <taxon>Cyanobacteriota</taxon>
        <taxon>Cyanophyceae</taxon>
        <taxon>Synechococcales</taxon>
        <taxon>Prochlorococcaceae</taxon>
        <taxon>Prochlorococcus</taxon>
    </lineage>
</organism>
<name>G6PI_PROMT</name>
<reference key="1">
    <citation type="journal article" date="2007" name="PLoS Genet.">
        <title>Patterns and implications of gene gain and loss in the evolution of Prochlorococcus.</title>
        <authorList>
            <person name="Kettler G.C."/>
            <person name="Martiny A.C."/>
            <person name="Huang K."/>
            <person name="Zucker J."/>
            <person name="Coleman M.L."/>
            <person name="Rodrigue S."/>
            <person name="Chen F."/>
            <person name="Lapidus A."/>
            <person name="Ferriera S."/>
            <person name="Johnson J."/>
            <person name="Steglich C."/>
            <person name="Church G.M."/>
            <person name="Richardson P."/>
            <person name="Chisholm S.W."/>
        </authorList>
    </citation>
    <scope>NUCLEOTIDE SEQUENCE [LARGE SCALE GENOMIC DNA]</scope>
    <source>
        <strain>NATL2A</strain>
    </source>
</reference>
<sequence>MNNNDKWARYCDLLYSDDSLGFWLDISRMDVAINDFEDFNEIYSKAFDALESLENGSIANIDEGRQVGHYWLRNPKVAPSPEISDSITKEIQDISKFGSSILNGEITNSDGEKYTDVFWIGIGGSGLGPLLIKESFKRESIGLDLHFLDNVDPEGISHKLNSILPNLNSTLFVVVSKSGGTPEPLIGMEQAMKFVRDNNQNWSSRAIAITSKGSKLDLLAHNENWLDIFDLPDWVGGRTSITGAVGLLPAALIGADINKFLNGASQMDALTRVKDIKNNPAALLSLAWFKSGNGKGLRDMVVLPYRDRLEVFSRYLQQLVMESLGKKFDRDENQVNQGIAVYGNKGSTDQHAYVQQLRDGIDNFFVNFIEILHDPLEIVEVKNKRPGDYLSGFLQGTRSALTEGGRQNLTITFKSFDESSLGALIALFERAVSLYAELINVNAYNQPGVEAGKKAATKIIKLQKEIEELLDDGKQRTLNEINDALSSDSTESIYLILRKLSENSDHYSMIGNQSNPDKLIISKT</sequence>
<protein>
    <recommendedName>
        <fullName evidence="1">Glucose-6-phosphate isomerase</fullName>
        <shortName evidence="1">GPI</shortName>
        <ecNumber evidence="1">5.3.1.9</ecNumber>
    </recommendedName>
    <alternativeName>
        <fullName evidence="1">Phosphoglucose isomerase</fullName>
        <shortName evidence="1">PGI</shortName>
    </alternativeName>
    <alternativeName>
        <fullName evidence="1">Phosphohexose isomerase</fullName>
        <shortName evidence="1">PHI</shortName>
    </alternativeName>
</protein>
<feature type="chain" id="PRO_0000230926" description="Glucose-6-phosphate isomerase">
    <location>
        <begin position="1"/>
        <end position="524"/>
    </location>
</feature>
<feature type="active site" description="Proton donor" evidence="1">
    <location>
        <position position="322"/>
    </location>
</feature>
<feature type="active site" evidence="1">
    <location>
        <position position="351"/>
    </location>
</feature>
<feature type="active site" evidence="1">
    <location>
        <position position="453"/>
    </location>
</feature>
<accession>Q46L16</accession>
<evidence type="ECO:0000255" key="1">
    <source>
        <dbReference type="HAMAP-Rule" id="MF_00473"/>
    </source>
</evidence>
<evidence type="ECO:0000305" key="2"/>
<proteinExistence type="inferred from homology"/>